<dbReference type="EMBL" id="CP000238">
    <property type="protein sequence ID" value="ABF13774.1"/>
    <property type="molecule type" value="Genomic_DNA"/>
</dbReference>
<dbReference type="RefSeq" id="WP_011520693.1">
    <property type="nucleotide sequence ID" value="NC_007984.1"/>
</dbReference>
<dbReference type="SMR" id="Q1LSV4"/>
<dbReference type="STRING" id="374463.BCI_0530"/>
<dbReference type="KEGG" id="bci:BCI_0530"/>
<dbReference type="HOGENOM" id="CLU_073981_2_0_6"/>
<dbReference type="OrthoDB" id="9804006at2"/>
<dbReference type="Proteomes" id="UP000002427">
    <property type="component" value="Chromosome"/>
</dbReference>
<dbReference type="GO" id="GO:0005829">
    <property type="term" value="C:cytosol"/>
    <property type="evidence" value="ECO:0007669"/>
    <property type="project" value="GOC"/>
</dbReference>
<dbReference type="GO" id="GO:0043023">
    <property type="term" value="F:ribosomal large subunit binding"/>
    <property type="evidence" value="ECO:0007669"/>
    <property type="project" value="TreeGrafter"/>
</dbReference>
<dbReference type="GO" id="GO:0002184">
    <property type="term" value="P:cytoplasmic translational termination"/>
    <property type="evidence" value="ECO:0007669"/>
    <property type="project" value="TreeGrafter"/>
</dbReference>
<dbReference type="CDD" id="cd00520">
    <property type="entry name" value="RRF"/>
    <property type="match status" value="1"/>
</dbReference>
<dbReference type="FunFam" id="1.10.132.20:FF:000001">
    <property type="entry name" value="Ribosome-recycling factor"/>
    <property type="match status" value="1"/>
</dbReference>
<dbReference type="FunFam" id="3.30.1360.40:FF:000001">
    <property type="entry name" value="Ribosome-recycling factor"/>
    <property type="match status" value="1"/>
</dbReference>
<dbReference type="Gene3D" id="3.30.1360.40">
    <property type="match status" value="1"/>
</dbReference>
<dbReference type="Gene3D" id="1.10.132.20">
    <property type="entry name" value="Ribosome-recycling factor"/>
    <property type="match status" value="1"/>
</dbReference>
<dbReference type="HAMAP" id="MF_00040">
    <property type="entry name" value="RRF"/>
    <property type="match status" value="1"/>
</dbReference>
<dbReference type="InterPro" id="IPR002661">
    <property type="entry name" value="Ribosome_recyc_fac"/>
</dbReference>
<dbReference type="InterPro" id="IPR023584">
    <property type="entry name" value="Ribosome_recyc_fac_dom"/>
</dbReference>
<dbReference type="InterPro" id="IPR036191">
    <property type="entry name" value="RRF_sf"/>
</dbReference>
<dbReference type="NCBIfam" id="TIGR00496">
    <property type="entry name" value="frr"/>
    <property type="match status" value="1"/>
</dbReference>
<dbReference type="PANTHER" id="PTHR20982:SF3">
    <property type="entry name" value="MITOCHONDRIAL RIBOSOME RECYCLING FACTOR PSEUDO 1"/>
    <property type="match status" value="1"/>
</dbReference>
<dbReference type="PANTHER" id="PTHR20982">
    <property type="entry name" value="RIBOSOME RECYCLING FACTOR"/>
    <property type="match status" value="1"/>
</dbReference>
<dbReference type="Pfam" id="PF01765">
    <property type="entry name" value="RRF"/>
    <property type="match status" value="1"/>
</dbReference>
<dbReference type="SUPFAM" id="SSF55194">
    <property type="entry name" value="Ribosome recycling factor, RRF"/>
    <property type="match status" value="1"/>
</dbReference>
<accession>Q1LSV4</accession>
<reference key="1">
    <citation type="journal article" date="2006" name="PLoS Biol.">
        <title>Metabolic complementarity and genomics of the dual bacterial symbiosis of sharpshooters.</title>
        <authorList>
            <person name="Wu D."/>
            <person name="Daugherty S.C."/>
            <person name="Van Aken S.E."/>
            <person name="Pai G.H."/>
            <person name="Watkins K.L."/>
            <person name="Khouri H."/>
            <person name="Tallon L.J."/>
            <person name="Zaborsky J.M."/>
            <person name="Dunbar H.E."/>
            <person name="Tran P.L."/>
            <person name="Moran N.A."/>
            <person name="Eisen J.A."/>
        </authorList>
    </citation>
    <scope>NUCLEOTIDE SEQUENCE [LARGE SCALE GENOMIC DNA]</scope>
</reference>
<organism>
    <name type="scientific">Baumannia cicadellinicola subsp. Homalodisca coagulata</name>
    <dbReference type="NCBI Taxonomy" id="374463"/>
    <lineage>
        <taxon>Bacteria</taxon>
        <taxon>Pseudomonadati</taxon>
        <taxon>Pseudomonadota</taxon>
        <taxon>Gammaproteobacteria</taxon>
        <taxon>Candidatus Palibaumannia</taxon>
    </lineage>
</organism>
<keyword id="KW-0963">Cytoplasm</keyword>
<keyword id="KW-0648">Protein biosynthesis</keyword>
<keyword id="KW-1185">Reference proteome</keyword>
<comment type="function">
    <text evidence="1">Responsible for the release of ribosomes from messenger RNA at the termination of protein biosynthesis. May increase the efficiency of translation by recycling ribosomes from one round of translation to another.</text>
</comment>
<comment type="subcellular location">
    <subcellularLocation>
        <location evidence="1">Cytoplasm</location>
    </subcellularLocation>
</comment>
<comment type="similarity">
    <text evidence="1">Belongs to the RRF family.</text>
</comment>
<gene>
    <name evidence="1" type="primary">frr</name>
    <name type="ordered locus">BCI_0530</name>
</gene>
<feature type="chain" id="PRO_0000341001" description="Ribosome-recycling factor">
    <location>
        <begin position="1"/>
        <end position="185"/>
    </location>
</feature>
<proteinExistence type="inferred from homology"/>
<sequence length="185" mass="21573">MINNIRQDAEVRMEKCLETFKNNISKLRTGRANPNLLDNIKVDYYGSIMPLRQLANIIVEDTRTLVITLFDQSIIKRVEKAIIISDLGLTPDLSGTIIRVQLPSLTEERRRNLIKIVRNEAEQGKISVRNIRRDANDHIKILLKNKAISIDEERRSQSEIQKITEAWIRRLDQILSEKERELIDF</sequence>
<protein>
    <recommendedName>
        <fullName evidence="1">Ribosome-recycling factor</fullName>
        <shortName evidence="1">RRF</shortName>
    </recommendedName>
    <alternativeName>
        <fullName evidence="1">Ribosome-releasing factor</fullName>
    </alternativeName>
</protein>
<name>RRF_BAUCH</name>
<evidence type="ECO:0000255" key="1">
    <source>
        <dbReference type="HAMAP-Rule" id="MF_00040"/>
    </source>
</evidence>